<comment type="function">
    <text evidence="1">Catalyzes the condensation of pantoate with beta-alanine in an ATP-dependent reaction via a pantoyl-adenylate intermediate.</text>
</comment>
<comment type="catalytic activity">
    <reaction evidence="1">
        <text>(R)-pantoate + beta-alanine + ATP = (R)-pantothenate + AMP + diphosphate + H(+)</text>
        <dbReference type="Rhea" id="RHEA:10912"/>
        <dbReference type="ChEBI" id="CHEBI:15378"/>
        <dbReference type="ChEBI" id="CHEBI:15980"/>
        <dbReference type="ChEBI" id="CHEBI:29032"/>
        <dbReference type="ChEBI" id="CHEBI:30616"/>
        <dbReference type="ChEBI" id="CHEBI:33019"/>
        <dbReference type="ChEBI" id="CHEBI:57966"/>
        <dbReference type="ChEBI" id="CHEBI:456215"/>
        <dbReference type="EC" id="6.3.2.1"/>
    </reaction>
</comment>
<comment type="pathway">
    <text evidence="1">Cofactor biosynthesis; (R)-pantothenate biosynthesis; (R)-pantothenate from (R)-pantoate and beta-alanine: step 1/1.</text>
</comment>
<comment type="subunit">
    <text evidence="1">Homodimer.</text>
</comment>
<comment type="subcellular location">
    <subcellularLocation>
        <location evidence="1">Cytoplasm</location>
    </subcellularLocation>
</comment>
<comment type="miscellaneous">
    <text evidence="1">The reaction proceeds by a bi uni uni bi ping pong mechanism.</text>
</comment>
<comment type="similarity">
    <text evidence="1">Belongs to the pantothenate synthetase family.</text>
</comment>
<sequence>MNIVNTIKDVRLIIKKWKDENLSIGYVPTMGYLHEGHASLIKKAREENDKVIVSIFVNPIQFGPKEDYSTYPRDLVKDSSLCEKFGVDLIFNPETSEMYPNKIYSHINVDILTENLCGEKRPGHFQGVCTVLTKFFNILNPTKAYFGEKDAQQLAVVRKMVEDLNFPIEIIGCPIIREDDGLAKSSRNAYLNKQERKSALILNKSLKEALNALESEEKNSNNIKDIIVSKLNKEPLAKIDYVSIVDSITLQSVEKIQSPILVAIAVYIGKTRLIDNFTFKL</sequence>
<dbReference type="EC" id="6.3.2.1" evidence="1"/>
<dbReference type="EMBL" id="CP001581">
    <property type="protein sequence ID" value="ACO87233.1"/>
    <property type="molecule type" value="Genomic_DNA"/>
</dbReference>
<dbReference type="RefSeq" id="WP_012705747.1">
    <property type="nucleotide sequence ID" value="NC_012563.1"/>
</dbReference>
<dbReference type="SMR" id="C1FS96"/>
<dbReference type="KEGG" id="cby:CLM_0504"/>
<dbReference type="eggNOG" id="COG0414">
    <property type="taxonomic scope" value="Bacteria"/>
</dbReference>
<dbReference type="HOGENOM" id="CLU_047148_0_0_9"/>
<dbReference type="UniPathway" id="UPA00028">
    <property type="reaction ID" value="UER00005"/>
</dbReference>
<dbReference type="Proteomes" id="UP000001374">
    <property type="component" value="Chromosome"/>
</dbReference>
<dbReference type="GO" id="GO:0005829">
    <property type="term" value="C:cytosol"/>
    <property type="evidence" value="ECO:0007669"/>
    <property type="project" value="TreeGrafter"/>
</dbReference>
<dbReference type="GO" id="GO:0005524">
    <property type="term" value="F:ATP binding"/>
    <property type="evidence" value="ECO:0007669"/>
    <property type="project" value="UniProtKB-KW"/>
</dbReference>
<dbReference type="GO" id="GO:0004592">
    <property type="term" value="F:pantoate-beta-alanine ligase activity"/>
    <property type="evidence" value="ECO:0007669"/>
    <property type="project" value="UniProtKB-UniRule"/>
</dbReference>
<dbReference type="GO" id="GO:0015940">
    <property type="term" value="P:pantothenate biosynthetic process"/>
    <property type="evidence" value="ECO:0007669"/>
    <property type="project" value="UniProtKB-UniRule"/>
</dbReference>
<dbReference type="CDD" id="cd00560">
    <property type="entry name" value="PanC"/>
    <property type="match status" value="1"/>
</dbReference>
<dbReference type="FunFam" id="3.30.1300.10:FF:000001">
    <property type="entry name" value="Pantothenate synthetase"/>
    <property type="match status" value="1"/>
</dbReference>
<dbReference type="FunFam" id="3.40.50.620:FF:000013">
    <property type="entry name" value="Pantothenate synthetase"/>
    <property type="match status" value="1"/>
</dbReference>
<dbReference type="Gene3D" id="3.40.50.620">
    <property type="entry name" value="HUPs"/>
    <property type="match status" value="1"/>
</dbReference>
<dbReference type="Gene3D" id="3.30.1300.10">
    <property type="entry name" value="Pantoate-beta-alanine ligase, C-terminal domain"/>
    <property type="match status" value="1"/>
</dbReference>
<dbReference type="HAMAP" id="MF_00158">
    <property type="entry name" value="PanC"/>
    <property type="match status" value="1"/>
</dbReference>
<dbReference type="InterPro" id="IPR004821">
    <property type="entry name" value="Cyt_trans-like"/>
</dbReference>
<dbReference type="InterPro" id="IPR003721">
    <property type="entry name" value="Pantoate_ligase"/>
</dbReference>
<dbReference type="InterPro" id="IPR042176">
    <property type="entry name" value="Pantoate_ligase_C"/>
</dbReference>
<dbReference type="InterPro" id="IPR014729">
    <property type="entry name" value="Rossmann-like_a/b/a_fold"/>
</dbReference>
<dbReference type="NCBIfam" id="TIGR00125">
    <property type="entry name" value="cyt_tran_rel"/>
    <property type="match status" value="1"/>
</dbReference>
<dbReference type="NCBIfam" id="TIGR00018">
    <property type="entry name" value="panC"/>
    <property type="match status" value="1"/>
</dbReference>
<dbReference type="PANTHER" id="PTHR21299">
    <property type="entry name" value="CYTIDYLATE KINASE/PANTOATE-BETA-ALANINE LIGASE"/>
    <property type="match status" value="1"/>
</dbReference>
<dbReference type="PANTHER" id="PTHR21299:SF1">
    <property type="entry name" value="PANTOATE--BETA-ALANINE LIGASE"/>
    <property type="match status" value="1"/>
</dbReference>
<dbReference type="Pfam" id="PF02569">
    <property type="entry name" value="Pantoate_ligase"/>
    <property type="match status" value="1"/>
</dbReference>
<dbReference type="SUPFAM" id="SSF52374">
    <property type="entry name" value="Nucleotidylyl transferase"/>
    <property type="match status" value="1"/>
</dbReference>
<keyword id="KW-0067">ATP-binding</keyword>
<keyword id="KW-0963">Cytoplasm</keyword>
<keyword id="KW-0436">Ligase</keyword>
<keyword id="KW-0547">Nucleotide-binding</keyword>
<keyword id="KW-0566">Pantothenate biosynthesis</keyword>
<proteinExistence type="inferred from homology"/>
<accession>C1FS96</accession>
<organism>
    <name type="scientific">Clostridium botulinum (strain Kyoto / Type A2)</name>
    <dbReference type="NCBI Taxonomy" id="536232"/>
    <lineage>
        <taxon>Bacteria</taxon>
        <taxon>Bacillati</taxon>
        <taxon>Bacillota</taxon>
        <taxon>Clostridia</taxon>
        <taxon>Eubacteriales</taxon>
        <taxon>Clostridiaceae</taxon>
        <taxon>Clostridium</taxon>
    </lineage>
</organism>
<reference key="1">
    <citation type="submission" date="2008-10" db="EMBL/GenBank/DDBJ databases">
        <title>Genome sequence of Clostridium botulinum A2 Kyoto.</title>
        <authorList>
            <person name="Shrivastava S."/>
            <person name="Brinkac L.M."/>
            <person name="Brown J.L."/>
            <person name="Bruce D."/>
            <person name="Detter C.C."/>
            <person name="Johnson E.A."/>
            <person name="Munk C.A."/>
            <person name="Smith L.A."/>
            <person name="Smith T.J."/>
            <person name="Sutton G."/>
            <person name="Brettin T.S."/>
        </authorList>
    </citation>
    <scope>NUCLEOTIDE SEQUENCE [LARGE SCALE GENOMIC DNA]</scope>
    <source>
        <strain>Kyoto / Type A2</strain>
    </source>
</reference>
<feature type="chain" id="PRO_1000123407" description="Pantothenate synthetase">
    <location>
        <begin position="1"/>
        <end position="281"/>
    </location>
</feature>
<feature type="active site" description="Proton donor" evidence="1">
    <location>
        <position position="37"/>
    </location>
</feature>
<feature type="binding site" evidence="1">
    <location>
        <begin position="30"/>
        <end position="37"/>
    </location>
    <ligand>
        <name>ATP</name>
        <dbReference type="ChEBI" id="CHEBI:30616"/>
    </ligand>
</feature>
<feature type="binding site" evidence="1">
    <location>
        <position position="61"/>
    </location>
    <ligand>
        <name>(R)-pantoate</name>
        <dbReference type="ChEBI" id="CHEBI:15980"/>
    </ligand>
</feature>
<feature type="binding site" evidence="1">
    <location>
        <position position="61"/>
    </location>
    <ligand>
        <name>beta-alanine</name>
        <dbReference type="ChEBI" id="CHEBI:57966"/>
    </ligand>
</feature>
<feature type="binding site" evidence="1">
    <location>
        <begin position="147"/>
        <end position="150"/>
    </location>
    <ligand>
        <name>ATP</name>
        <dbReference type="ChEBI" id="CHEBI:30616"/>
    </ligand>
</feature>
<feature type="binding site" evidence="1">
    <location>
        <position position="153"/>
    </location>
    <ligand>
        <name>(R)-pantoate</name>
        <dbReference type="ChEBI" id="CHEBI:15980"/>
    </ligand>
</feature>
<feature type="binding site" evidence="1">
    <location>
        <position position="176"/>
    </location>
    <ligand>
        <name>ATP</name>
        <dbReference type="ChEBI" id="CHEBI:30616"/>
    </ligand>
</feature>
<feature type="binding site" evidence="1">
    <location>
        <begin position="184"/>
        <end position="187"/>
    </location>
    <ligand>
        <name>ATP</name>
        <dbReference type="ChEBI" id="CHEBI:30616"/>
    </ligand>
</feature>
<gene>
    <name evidence="1" type="primary">panC</name>
    <name type="ordered locus">CLM_0504</name>
</gene>
<name>PANC_CLOBJ</name>
<protein>
    <recommendedName>
        <fullName evidence="1">Pantothenate synthetase</fullName>
        <shortName evidence="1">PS</shortName>
        <ecNumber evidence="1">6.3.2.1</ecNumber>
    </recommendedName>
    <alternativeName>
        <fullName evidence="1">Pantoate--beta-alanine ligase</fullName>
    </alternativeName>
    <alternativeName>
        <fullName evidence="1">Pantoate-activating enzyme</fullName>
    </alternativeName>
</protein>
<evidence type="ECO:0000255" key="1">
    <source>
        <dbReference type="HAMAP-Rule" id="MF_00158"/>
    </source>
</evidence>